<reference key="1">
    <citation type="submission" date="2006-01" db="EMBL/GenBank/DDBJ databases">
        <title>Complete sequence of Novosphingobium aromaticivorans DSM 12444.</title>
        <authorList>
            <consortium name="US DOE Joint Genome Institute"/>
            <person name="Copeland A."/>
            <person name="Lucas S."/>
            <person name="Lapidus A."/>
            <person name="Barry K."/>
            <person name="Detter J.C."/>
            <person name="Glavina T."/>
            <person name="Hammon N."/>
            <person name="Israni S."/>
            <person name="Pitluck S."/>
            <person name="Chain P."/>
            <person name="Malfatti S."/>
            <person name="Shin M."/>
            <person name="Vergez L."/>
            <person name="Schmutz J."/>
            <person name="Larimer F."/>
            <person name="Land M."/>
            <person name="Kyrpides N."/>
            <person name="Ivanova N."/>
            <person name="Fredrickson J."/>
            <person name="Balkwill D."/>
            <person name="Romine M.F."/>
            <person name="Richardson P."/>
        </authorList>
    </citation>
    <scope>NUCLEOTIDE SEQUENCE [LARGE SCALE GENOMIC DNA]</scope>
    <source>
        <strain>ATCC 700278 / DSM 12444 / CCUG 56034 / CIP 105152 / NBRC 16084 / F199</strain>
    </source>
</reference>
<comment type="function">
    <text evidence="1">Catalyzes the transfer of a dimethylallyl group onto the adenine at position 37 in tRNAs that read codons beginning with uridine, leading to the formation of N6-(dimethylallyl)adenosine (i(6)A).</text>
</comment>
<comment type="catalytic activity">
    <reaction evidence="1">
        <text>adenosine(37) in tRNA + dimethylallyl diphosphate = N(6)-dimethylallyladenosine(37) in tRNA + diphosphate</text>
        <dbReference type="Rhea" id="RHEA:26482"/>
        <dbReference type="Rhea" id="RHEA-COMP:10162"/>
        <dbReference type="Rhea" id="RHEA-COMP:10375"/>
        <dbReference type="ChEBI" id="CHEBI:33019"/>
        <dbReference type="ChEBI" id="CHEBI:57623"/>
        <dbReference type="ChEBI" id="CHEBI:74411"/>
        <dbReference type="ChEBI" id="CHEBI:74415"/>
        <dbReference type="EC" id="2.5.1.75"/>
    </reaction>
</comment>
<comment type="cofactor">
    <cofactor evidence="1">
        <name>Mg(2+)</name>
        <dbReference type="ChEBI" id="CHEBI:18420"/>
    </cofactor>
</comment>
<comment type="subunit">
    <text evidence="1">Monomer.</text>
</comment>
<comment type="similarity">
    <text evidence="1">Belongs to the IPP transferase family.</text>
</comment>
<proteinExistence type="inferred from homology"/>
<evidence type="ECO:0000255" key="1">
    <source>
        <dbReference type="HAMAP-Rule" id="MF_00185"/>
    </source>
</evidence>
<name>MIAA_NOVAD</name>
<gene>
    <name evidence="1" type="primary">miaA</name>
    <name type="ordered locus">Saro_2260</name>
</gene>
<feature type="chain" id="PRO_0000377245" description="tRNA dimethylallyltransferase">
    <location>
        <begin position="1"/>
        <end position="281"/>
    </location>
</feature>
<feature type="region of interest" description="Interaction with substrate tRNA" evidence="1">
    <location>
        <begin position="13"/>
        <end position="16"/>
    </location>
</feature>
<feature type="region of interest" description="Interaction with substrate tRNA" evidence="1">
    <location>
        <begin position="133"/>
        <end position="137"/>
    </location>
</feature>
<feature type="site" description="Interaction with substrate tRNA" evidence="1">
    <location>
        <position position="79"/>
    </location>
</feature>
<feature type="site" description="Interaction with substrate tRNA" evidence="1">
    <location>
        <position position="101"/>
    </location>
</feature>
<organism>
    <name type="scientific">Novosphingobium aromaticivorans (strain ATCC 700278 / DSM 12444 / CCUG 56034 / CIP 105152 / NBRC 16084 / F199)</name>
    <dbReference type="NCBI Taxonomy" id="279238"/>
    <lineage>
        <taxon>Bacteria</taxon>
        <taxon>Pseudomonadati</taxon>
        <taxon>Pseudomonadota</taxon>
        <taxon>Alphaproteobacteria</taxon>
        <taxon>Sphingomonadales</taxon>
        <taxon>Sphingomonadaceae</taxon>
        <taxon>Novosphingobium</taxon>
    </lineage>
</organism>
<protein>
    <recommendedName>
        <fullName evidence="1">tRNA dimethylallyltransferase</fullName>
        <ecNumber evidence="1">2.5.1.75</ecNumber>
    </recommendedName>
    <alternativeName>
        <fullName evidence="1">Dimethylallyl diphosphate:tRNA dimethylallyltransferase</fullName>
        <shortName evidence="1">DMAPP:tRNA dimethylallyltransferase</shortName>
        <shortName evidence="1">DMATase</shortName>
    </alternativeName>
    <alternativeName>
        <fullName evidence="1">Isopentenyl-diphosphate:tRNA isopentenyltransferase</fullName>
        <shortName evidence="1">IPP transferase</shortName>
        <shortName evidence="1">IPPT</shortName>
        <shortName evidence="1">IPTase</shortName>
    </alternativeName>
</protein>
<dbReference type="EC" id="2.5.1.75" evidence="1"/>
<dbReference type="EMBL" id="CP000248">
    <property type="protein sequence ID" value="ABD26697.1"/>
    <property type="molecule type" value="Genomic_DNA"/>
</dbReference>
<dbReference type="SMR" id="Q2G626"/>
<dbReference type="STRING" id="279238.Saro_2260"/>
<dbReference type="KEGG" id="nar:Saro_2260"/>
<dbReference type="eggNOG" id="COG0324">
    <property type="taxonomic scope" value="Bacteria"/>
</dbReference>
<dbReference type="HOGENOM" id="CLU_032616_0_1_5"/>
<dbReference type="Proteomes" id="UP000009134">
    <property type="component" value="Chromosome"/>
</dbReference>
<dbReference type="GO" id="GO:0005524">
    <property type="term" value="F:ATP binding"/>
    <property type="evidence" value="ECO:0007669"/>
    <property type="project" value="UniProtKB-UniRule"/>
</dbReference>
<dbReference type="GO" id="GO:0052381">
    <property type="term" value="F:tRNA dimethylallyltransferase activity"/>
    <property type="evidence" value="ECO:0007669"/>
    <property type="project" value="UniProtKB-UniRule"/>
</dbReference>
<dbReference type="GO" id="GO:0006400">
    <property type="term" value="P:tRNA modification"/>
    <property type="evidence" value="ECO:0007669"/>
    <property type="project" value="TreeGrafter"/>
</dbReference>
<dbReference type="Gene3D" id="1.10.20.140">
    <property type="match status" value="1"/>
</dbReference>
<dbReference type="Gene3D" id="3.40.50.300">
    <property type="entry name" value="P-loop containing nucleotide triphosphate hydrolases"/>
    <property type="match status" value="1"/>
</dbReference>
<dbReference type="HAMAP" id="MF_00185">
    <property type="entry name" value="IPP_trans"/>
    <property type="match status" value="1"/>
</dbReference>
<dbReference type="InterPro" id="IPR039657">
    <property type="entry name" value="Dimethylallyltransferase"/>
</dbReference>
<dbReference type="InterPro" id="IPR018022">
    <property type="entry name" value="IPT"/>
</dbReference>
<dbReference type="InterPro" id="IPR027417">
    <property type="entry name" value="P-loop_NTPase"/>
</dbReference>
<dbReference type="NCBIfam" id="TIGR00174">
    <property type="entry name" value="miaA"/>
    <property type="match status" value="1"/>
</dbReference>
<dbReference type="PANTHER" id="PTHR11088">
    <property type="entry name" value="TRNA DIMETHYLALLYLTRANSFERASE"/>
    <property type="match status" value="1"/>
</dbReference>
<dbReference type="PANTHER" id="PTHR11088:SF60">
    <property type="entry name" value="TRNA DIMETHYLALLYLTRANSFERASE"/>
    <property type="match status" value="1"/>
</dbReference>
<dbReference type="Pfam" id="PF01715">
    <property type="entry name" value="IPPT"/>
    <property type="match status" value="1"/>
</dbReference>
<dbReference type="SUPFAM" id="SSF52540">
    <property type="entry name" value="P-loop containing nucleoside triphosphate hydrolases"/>
    <property type="match status" value="1"/>
</dbReference>
<keyword id="KW-0067">ATP-binding</keyword>
<keyword id="KW-0460">Magnesium</keyword>
<keyword id="KW-0547">Nucleotide-binding</keyword>
<keyword id="KW-1185">Reference proteome</keyword>
<keyword id="KW-0808">Transferase</keyword>
<keyword id="KW-0819">tRNA processing</keyword>
<accession>Q2G626</accession>
<sequence length="281" mass="31073">MDRGQDAVIVNADSAQVYADLRVLSARPSDEEMRGVPHVLFGAWDGARACSAADWAAAARREIAAAHQRGALPILVGGTGLYIRTLLDGIAPVPEIDPQVREEVRAMPLEAAYAELEKSDPERARKLAPADAQRITRALEVMRSTGRPLAYWQQQLSGGIGNDVALAPLILLPERQWLYRRCDLRFELMWDGGALEEVEALLARDLPDSLPVMRAIGVPEIAAFLRGDLSRDAAIASGQQATRNYAKRQYTWLRHQNPGDWPRMEYDNSIDSAKIASLLRL</sequence>